<dbReference type="EMBL" id="AJ487962">
    <property type="protein sequence ID" value="CAD32309.1"/>
    <property type="molecule type" value="mRNA"/>
</dbReference>
<dbReference type="EMBL" id="BC021197">
    <property type="protein sequence ID" value="AAH21197.2"/>
    <property type="status" value="ALT_SEQ"/>
    <property type="molecule type" value="mRNA"/>
</dbReference>
<dbReference type="CCDS" id="CCDS13712.1">
    <molecule id="Q8WU66-1"/>
</dbReference>
<dbReference type="RefSeq" id="NP_001258966.1">
    <property type="nucleotide sequence ID" value="NM_001272037.1"/>
</dbReference>
<dbReference type="RefSeq" id="NP_659428.2">
    <molecule id="Q8WU66-1"/>
    <property type="nucleotide sequence ID" value="NM_144991.2"/>
</dbReference>
<dbReference type="SMR" id="Q8WU66"/>
<dbReference type="BioGRID" id="119886">
    <property type="interactions" value="1"/>
</dbReference>
<dbReference type="FunCoup" id="Q8WU66">
    <property type="interactions" value="33"/>
</dbReference>
<dbReference type="IntAct" id="Q8WU66">
    <property type="interactions" value="1"/>
</dbReference>
<dbReference type="STRING" id="9606.ENSP00000321987"/>
<dbReference type="GlyCosmos" id="Q8WU66">
    <property type="glycosylation" value="5 sites, No reported glycans"/>
</dbReference>
<dbReference type="GlyGen" id="Q8WU66">
    <property type="glycosylation" value="5 sites"/>
</dbReference>
<dbReference type="iPTMnet" id="Q8WU66"/>
<dbReference type="PhosphoSitePlus" id="Q8WU66"/>
<dbReference type="BioMuta" id="TSPEAR"/>
<dbReference type="DMDM" id="26006900"/>
<dbReference type="jPOST" id="Q8WU66"/>
<dbReference type="MassIVE" id="Q8WU66"/>
<dbReference type="PaxDb" id="9606-ENSP00000321987"/>
<dbReference type="PeptideAtlas" id="Q8WU66"/>
<dbReference type="Antibodypedia" id="53321">
    <property type="antibodies" value="91 antibodies from 14 providers"/>
</dbReference>
<dbReference type="DNASU" id="54084"/>
<dbReference type="Ensembl" id="ENST00000323084.9">
    <molecule id="Q8WU66-1"/>
    <property type="protein sequence ID" value="ENSP00000321987.4"/>
    <property type="gene ID" value="ENSG00000175894.18"/>
</dbReference>
<dbReference type="GeneID" id="54084"/>
<dbReference type="KEGG" id="hsa:54084"/>
<dbReference type="MANE-Select" id="ENST00000323084.9">
    <property type="protein sequence ID" value="ENSP00000321987.4"/>
    <property type="RefSeq nucleotide sequence ID" value="NM_144991.3"/>
    <property type="RefSeq protein sequence ID" value="NP_659428.2"/>
</dbReference>
<dbReference type="UCSC" id="uc002zfe.1">
    <molecule id="Q8WU66-1"/>
    <property type="organism name" value="human"/>
</dbReference>
<dbReference type="AGR" id="HGNC:1268"/>
<dbReference type="CTD" id="54084"/>
<dbReference type="DisGeNET" id="54084"/>
<dbReference type="GeneCards" id="TSPEAR"/>
<dbReference type="HGNC" id="HGNC:1268">
    <property type="gene designation" value="TSPEAR"/>
</dbReference>
<dbReference type="HPA" id="ENSG00000175894">
    <property type="expression patterns" value="Tissue enhanced (choroid plexus, testis)"/>
</dbReference>
<dbReference type="MalaCards" id="TSPEAR"/>
<dbReference type="MIM" id="612920">
    <property type="type" value="gene"/>
</dbReference>
<dbReference type="MIM" id="614861">
    <property type="type" value="phenotype"/>
</dbReference>
<dbReference type="MIM" id="618180">
    <property type="type" value="phenotype"/>
</dbReference>
<dbReference type="MIM" id="620173">
    <property type="type" value="phenotype"/>
</dbReference>
<dbReference type="neXtProt" id="NX_Q8WU66"/>
<dbReference type="OpenTargets" id="ENSG00000175894"/>
<dbReference type="Orphanet" id="685067">
    <property type="disease" value="Hypodontia-scalp hypotrichosis-facial dysmorphism syndrome"/>
</dbReference>
<dbReference type="PharmGKB" id="PA25824"/>
<dbReference type="VEuPathDB" id="HostDB:ENSG00000175894"/>
<dbReference type="eggNOG" id="KOG3544">
    <property type="taxonomic scope" value="Eukaryota"/>
</dbReference>
<dbReference type="GeneTree" id="ENSGT00510000047718"/>
<dbReference type="InParanoid" id="Q8WU66"/>
<dbReference type="OMA" id="THGARDW"/>
<dbReference type="OrthoDB" id="408373at2759"/>
<dbReference type="PAN-GO" id="Q8WU66">
    <property type="GO annotations" value="1 GO annotation based on evolutionary models"/>
</dbReference>
<dbReference type="PhylomeDB" id="Q8WU66"/>
<dbReference type="TreeFam" id="TF329841"/>
<dbReference type="PathwayCommons" id="Q8WU66"/>
<dbReference type="SignaLink" id="Q8WU66"/>
<dbReference type="BioGRID-ORCS" id="54084">
    <property type="hits" value="7 hits in 1146 CRISPR screens"/>
</dbReference>
<dbReference type="ChiTaRS" id="TSPEAR">
    <property type="organism name" value="human"/>
</dbReference>
<dbReference type="GenomeRNAi" id="54084"/>
<dbReference type="Pharos" id="Q8WU66">
    <property type="development level" value="Tbio"/>
</dbReference>
<dbReference type="PRO" id="PR:Q8WU66"/>
<dbReference type="Proteomes" id="UP000005640">
    <property type="component" value="Chromosome 21"/>
</dbReference>
<dbReference type="RNAct" id="Q8WU66">
    <property type="molecule type" value="protein"/>
</dbReference>
<dbReference type="Bgee" id="ENSG00000175894">
    <property type="expression patterns" value="Expressed in primordial germ cell in gonad and 58 other cell types or tissues"/>
</dbReference>
<dbReference type="ExpressionAtlas" id="Q8WU66">
    <property type="expression patterns" value="baseline and differential"/>
</dbReference>
<dbReference type="GO" id="GO:0009986">
    <property type="term" value="C:cell surface"/>
    <property type="evidence" value="ECO:0000250"/>
    <property type="project" value="UniProtKB"/>
</dbReference>
<dbReference type="GO" id="GO:0060170">
    <property type="term" value="C:ciliary membrane"/>
    <property type="evidence" value="ECO:0007669"/>
    <property type="project" value="Ensembl"/>
</dbReference>
<dbReference type="GO" id="GO:0005576">
    <property type="term" value="C:extracellular region"/>
    <property type="evidence" value="ECO:0007669"/>
    <property type="project" value="UniProtKB-SubCell"/>
</dbReference>
<dbReference type="GO" id="GO:0032420">
    <property type="term" value="C:stereocilium"/>
    <property type="evidence" value="ECO:0000250"/>
    <property type="project" value="UniProtKB"/>
</dbReference>
<dbReference type="GO" id="GO:0022405">
    <property type="term" value="P:hair cycle process"/>
    <property type="evidence" value="ECO:0007669"/>
    <property type="project" value="Ensembl"/>
</dbReference>
<dbReference type="GO" id="GO:0007219">
    <property type="term" value="P:Notch signaling pathway"/>
    <property type="evidence" value="ECO:0007669"/>
    <property type="project" value="Ensembl"/>
</dbReference>
<dbReference type="GO" id="GO:0008593">
    <property type="term" value="P:regulation of Notch signaling pathway"/>
    <property type="evidence" value="ECO:0000315"/>
    <property type="project" value="UniProtKB"/>
</dbReference>
<dbReference type="GO" id="GO:0007605">
    <property type="term" value="P:sensory perception of sound"/>
    <property type="evidence" value="ECO:0000315"/>
    <property type="project" value="UniProtKB"/>
</dbReference>
<dbReference type="GO" id="GO:0007165">
    <property type="term" value="P:signal transduction"/>
    <property type="evidence" value="ECO:0000318"/>
    <property type="project" value="GO_Central"/>
</dbReference>
<dbReference type="GO" id="GO:0034505">
    <property type="term" value="P:tooth mineralization"/>
    <property type="evidence" value="ECO:0000315"/>
    <property type="project" value="UniProtKB"/>
</dbReference>
<dbReference type="FunFam" id="2.60.120.200:FF:000203">
    <property type="entry name" value="Thrombospondin type laminin G domain and EAR repeats"/>
    <property type="match status" value="1"/>
</dbReference>
<dbReference type="Gene3D" id="2.60.120.200">
    <property type="match status" value="1"/>
</dbReference>
<dbReference type="InterPro" id="IPR013320">
    <property type="entry name" value="ConA-like_dom_sf"/>
</dbReference>
<dbReference type="InterPro" id="IPR009039">
    <property type="entry name" value="EAR"/>
</dbReference>
<dbReference type="InterPro" id="IPR005492">
    <property type="entry name" value="EPTP"/>
</dbReference>
<dbReference type="InterPro" id="IPR048287">
    <property type="entry name" value="TSPN-like_N"/>
</dbReference>
<dbReference type="PANTHER" id="PTHR15261">
    <property type="entry name" value="THROMBOSPONDIN-TYPE LAMININ G DOMAIN AND EAR REPEAT-CONTAINING"/>
    <property type="match status" value="1"/>
</dbReference>
<dbReference type="PANTHER" id="PTHR15261:SF4">
    <property type="entry name" value="THROMBOSPONDIN-TYPE LAMININ G DOMAIN AND EAR REPEAT-CONTAINING PROTEIN"/>
    <property type="match status" value="1"/>
</dbReference>
<dbReference type="Pfam" id="PF03736">
    <property type="entry name" value="EPTP"/>
    <property type="match status" value="5"/>
</dbReference>
<dbReference type="SMART" id="SM00210">
    <property type="entry name" value="TSPN"/>
    <property type="match status" value="1"/>
</dbReference>
<dbReference type="SUPFAM" id="SSF49899">
    <property type="entry name" value="Concanavalin A-like lectins/glucanases"/>
    <property type="match status" value="1"/>
</dbReference>
<dbReference type="PROSITE" id="PS50912">
    <property type="entry name" value="EAR"/>
    <property type="match status" value="7"/>
</dbReference>
<evidence type="ECO:0000250" key="1">
    <source>
        <dbReference type="UniProtKB" id="J3S6Y1"/>
    </source>
</evidence>
<evidence type="ECO:0000255" key="2"/>
<evidence type="ECO:0000255" key="3">
    <source>
        <dbReference type="PROSITE-ProRule" id="PRU00075"/>
    </source>
</evidence>
<evidence type="ECO:0000269" key="4">
    <source>
    </source>
</evidence>
<evidence type="ECO:0000269" key="5">
    <source>
    </source>
</evidence>
<evidence type="ECO:0000269" key="6">
    <source>
    </source>
</evidence>
<evidence type="ECO:0000269" key="7">
    <source>
    </source>
</evidence>
<evidence type="ECO:0000269" key="8">
    <source>
    </source>
</evidence>
<evidence type="ECO:0000269" key="9">
    <source>
    </source>
</evidence>
<evidence type="ECO:0000303" key="10">
    <source>
    </source>
</evidence>
<evidence type="ECO:0000305" key="11"/>
<proteinExistence type="evidence at protein level"/>
<feature type="signal peptide" evidence="2">
    <location>
        <begin position="1"/>
        <end position="19"/>
    </location>
</feature>
<feature type="chain" id="PRO_0000022597" description="Thrombospondin-type laminin G domain and EAR repeat-containing protein">
    <location>
        <begin position="20"/>
        <end position="669"/>
    </location>
</feature>
<feature type="domain" description="Laminin G-like">
    <location>
        <begin position="58"/>
        <end position="277"/>
    </location>
</feature>
<feature type="repeat" description="EAR 1" evidence="3">
    <location>
        <begin position="313"/>
        <end position="358"/>
    </location>
</feature>
<feature type="repeat" description="EAR 2" evidence="3">
    <location>
        <begin position="360"/>
        <end position="408"/>
    </location>
</feature>
<feature type="repeat" description="EAR 3" evidence="3">
    <location>
        <begin position="412"/>
        <end position="460"/>
    </location>
</feature>
<feature type="repeat" description="EAR 4" evidence="3">
    <location>
        <begin position="464"/>
        <end position="506"/>
    </location>
</feature>
<feature type="repeat" description="EAR 5" evidence="3">
    <location>
        <begin position="514"/>
        <end position="570"/>
    </location>
</feature>
<feature type="repeat" description="EAR 6" evidence="3">
    <location>
        <begin position="574"/>
        <end position="622"/>
    </location>
</feature>
<feature type="repeat" description="EAR 7" evidence="3">
    <location>
        <begin position="625"/>
        <end position="668"/>
    </location>
</feature>
<feature type="glycosylation site" description="N-linked (GlcNAc...) asparagine" evidence="2">
    <location>
        <position position="320"/>
    </location>
</feature>
<feature type="glycosylation site" description="N-linked (GlcNAc...) asparagine" evidence="2">
    <location>
        <position position="468"/>
    </location>
</feature>
<feature type="glycosylation site" description="N-linked (GlcNAc...) asparagine" evidence="2">
    <location>
        <position position="497"/>
    </location>
</feature>
<feature type="glycosylation site" description="N-linked (GlcNAc...) asparagine" evidence="2">
    <location>
        <position position="556"/>
    </location>
</feature>
<feature type="glycosylation site" description="N-linked (GlcNAc...) asparagine" evidence="2">
    <location>
        <position position="569"/>
    </location>
</feature>
<feature type="splice variant" id="VSP_004006" description="In isoform 2." evidence="10">
    <original>ALDWEFFSVGEDY</original>
    <variation>GGRRGLHARRAEG</variation>
    <location>
        <begin position="586"/>
        <end position="598"/>
    </location>
</feature>
<feature type="splice variant" id="VSP_004007" description="In isoform 2." evidence="10">
    <location>
        <begin position="599"/>
        <end position="669"/>
    </location>
</feature>
<feature type="sequence variant" id="VAR_087915" description="In ECTD14; uncertain significance." evidence="9">
    <original>C</original>
    <variation>W</variation>
    <location>
        <position position="80"/>
    </location>
</feature>
<feature type="sequence variant" id="VAR_036271" description="In a colorectal cancer sample; somatic mutation; dbSNP:rs782068174." evidence="4">
    <original>A</original>
    <variation>T</variation>
    <location>
        <position position="166"/>
    </location>
</feature>
<feature type="sequence variant" id="VAR_087916" description="In DFNB98; uncertain significance; dbSNP:rs782685093." evidence="9">
    <original>P</original>
    <variation>L</variation>
    <location>
        <position position="178"/>
    </location>
</feature>
<feature type="sequence variant" id="VAR_087917" description="In ECTD14 and STHAG10." evidence="9">
    <location>
        <begin position="197"/>
        <end position="669"/>
    </location>
</feature>
<feature type="sequence variant" id="VAR_087918" description="In ECTD14." evidence="9">
    <location>
        <begin position="314"/>
        <end position="669"/>
    </location>
</feature>
<feature type="sequence variant" id="VAR_087919" description="In DFNB98; uncertain significance." evidence="9">
    <original>V</original>
    <variation>A</variation>
    <location>
        <position position="388"/>
    </location>
</feature>
<feature type="sequence variant" id="VAR_087920" description="In STHAG10; uncertain significance; dbSNP:rs146014044." evidence="9">
    <original>R</original>
    <variation>Q</variation>
    <location>
        <position position="444"/>
    </location>
</feature>
<feature type="sequence variant" id="VAR_087921" description="In STHAG10; uncertain significance; dbSNP:rs782352724." evidence="8">
    <original>R</original>
    <variation>W</variation>
    <location>
        <position position="444"/>
    </location>
</feature>
<feature type="sequence variant" id="VAR_087922" description="In ECTD14; uncertain significance; dbSNP:rs781994662." evidence="9">
    <original>L</original>
    <variation>Q</variation>
    <location>
        <position position="490"/>
    </location>
</feature>
<feature type="sequence variant" id="VAR_087923" description="In STHAG10." evidence="8">
    <location>
        <begin position="510"/>
        <end position="669"/>
    </location>
</feature>
<feature type="sequence variant" id="VAR_087924" description="In ECTD14; uncertain significance; dbSNP:rs146677260." evidence="9">
    <original>G</original>
    <variation>D</variation>
    <location>
        <position position="525"/>
    </location>
</feature>
<feature type="sequence variant" id="VAR_087925" description="In STHAG10." evidence="9">
    <location>
        <begin position="555"/>
        <end position="669"/>
    </location>
</feature>
<feature type="sequence variant" id="VAR_081734" description="In ECTD14; uncertain significance; dbSNP:rs782543541." evidence="6">
    <original>V</original>
    <variation>F</variation>
    <location>
        <position position="576"/>
    </location>
</feature>
<feature type="sequence variant" id="VAR_087926" description="In ECTD14; uncertain significance; dbSNP:rs782716325." evidence="9">
    <original>S</original>
    <variation>I</variation>
    <location>
        <position position="585"/>
    </location>
</feature>
<feature type="sequence variant" id="VAR_081735" description="In ECTD14; uncertain significance; dbSNP:rs781868760." evidence="6">
    <original>Y</original>
    <variation>N</variation>
    <location>
        <position position="618"/>
    </location>
</feature>
<feature type="sequence variant" id="VAR_087927" description="In STHAG10; uncertain significance; dbSNP:rs369010851." evidence="7">
    <original>F</original>
    <variation>S</variation>
    <location>
        <position position="626"/>
    </location>
</feature>
<feature type="sequence variant" id="VAR_081736" description="In ECTD14 and STHAG10; uncertain significance; dbSNP:rs138480801." evidence="6 9">
    <original>D</original>
    <variation>N</variation>
    <location>
        <position position="639"/>
    </location>
</feature>
<accession>Q8WU66</accession>
<reference key="1">
    <citation type="journal article" date="2002" name="Hum. Mol. Genet.">
        <title>A common protein interaction domain links two recently identified epilepsy genes.</title>
        <authorList>
            <person name="Scheel H."/>
            <person name="Tomiuk S."/>
            <person name="Hofmann K."/>
        </authorList>
    </citation>
    <scope>NUCLEOTIDE SEQUENCE [MRNA] (ISOFORM 1)</scope>
</reference>
<reference key="2">
    <citation type="journal article" date="2004" name="Genome Res.">
        <title>The status, quality, and expansion of the NIH full-length cDNA project: the Mammalian Gene Collection (MGC).</title>
        <authorList>
            <consortium name="The MGC Project Team"/>
        </authorList>
    </citation>
    <scope>NUCLEOTIDE SEQUENCE [LARGE SCALE MRNA] OF 28-669 (ISOFORM 2)</scope>
    <source>
        <tissue>Lung</tissue>
    </source>
</reference>
<reference key="3">
    <citation type="journal article" date="2012" name="Hum. Mol. Genet.">
        <title>Defect in the gene encoding the EAR/EPTP domain-containing protein TSPEAR causes DFNB98 profound deafness.</title>
        <authorList>
            <person name="Delmaghani S."/>
            <person name="Aghaie A."/>
            <person name="Michalski N."/>
            <person name="Bonnet C."/>
            <person name="Weil D."/>
            <person name="Petit C."/>
        </authorList>
    </citation>
    <scope>POSSIBLE FUNCTION</scope>
    <scope>INVOLVEMENT IN DFNB98</scope>
</reference>
<reference key="4">
    <citation type="journal article" date="2006" name="Science">
        <title>The consensus coding sequences of human breast and colorectal cancers.</title>
        <authorList>
            <person name="Sjoeblom T."/>
            <person name="Jones S."/>
            <person name="Wood L.D."/>
            <person name="Parsons D.W."/>
            <person name="Lin J."/>
            <person name="Barber T.D."/>
            <person name="Mandelker D."/>
            <person name="Leary R.J."/>
            <person name="Ptak J."/>
            <person name="Silliman N."/>
            <person name="Szabo S."/>
            <person name="Buckhaults P."/>
            <person name="Farrell C."/>
            <person name="Meeh P."/>
            <person name="Markowitz S.D."/>
            <person name="Willis J."/>
            <person name="Dawson D."/>
            <person name="Willson J.K.V."/>
            <person name="Gazdar A.F."/>
            <person name="Hartigan J."/>
            <person name="Wu L."/>
            <person name="Liu C."/>
            <person name="Parmigiani G."/>
            <person name="Park B.H."/>
            <person name="Bachman K.E."/>
            <person name="Papadopoulos N."/>
            <person name="Vogelstein B."/>
            <person name="Kinzler K.W."/>
            <person name="Velculescu V.E."/>
        </authorList>
    </citation>
    <scope>VARIANT [LARGE SCALE ANALYSIS] THR-166</scope>
</reference>
<reference key="5">
    <citation type="journal article" date="2016" name="PLoS Genet.">
        <title>Mutations in TSPEAR, Encoding a Regulator of Notch Signaling, Affect Tooth and Hair Follicle Morphogenesis.</title>
        <authorList>
            <person name="Peled A."/>
            <person name="Sarig O."/>
            <person name="Samuelov L."/>
            <person name="Bertolini M."/>
            <person name="Ziv L."/>
            <person name="Weissglas-Volkov D."/>
            <person name="Eskin-Schwartz M."/>
            <person name="Adase C.A."/>
            <person name="Malchin N."/>
            <person name="Bochner R."/>
            <person name="Fainberg G."/>
            <person name="Goldberg I."/>
            <person name="Sugawara K."/>
            <person name="Baniel A."/>
            <person name="Tsuruta D."/>
            <person name="Luxenburg C."/>
            <person name="Adir N."/>
            <person name="Duverger O."/>
            <person name="Morasso M."/>
            <person name="Shalev S."/>
            <person name="Gallo R.L."/>
            <person name="Shomron N."/>
            <person name="Paus R."/>
            <person name="Sprecher E."/>
        </authorList>
    </citation>
    <scope>VARIANTS ECTD14 PHE-576; ASN-618 AND ASN-639</scope>
    <scope>INVOLVEMENT IN ECTD14</scope>
    <scope>FUNCTION</scope>
</reference>
<reference key="6">
    <citation type="journal article" date="2018" name="Hum. Genet.">
        <title>Identification of likely pathogenic and known variants in TSPEAR, LAMB3, BCOR, and WNT10A in four Turkish families with tooth agenesis.</title>
        <authorList>
            <person name="Du R."/>
            <person name="Dinckan N."/>
            <person name="Song X."/>
            <person name="Coban-Akdemir Z."/>
            <person name="Jhangiani S.N."/>
            <person name="Guven Y."/>
            <person name="Aktoren O."/>
            <person name="Kayserili H."/>
            <person name="Petty L.E."/>
            <person name="Muzny D.M."/>
            <person name="Below J.E."/>
            <person name="Boerwinkle E."/>
            <person name="Wu N."/>
            <person name="Gibbs R.A."/>
            <person name="Posey J.E."/>
            <person name="Lupski J.R."/>
            <person name="Letra A."/>
            <person name="Uyguner Z.O."/>
        </authorList>
    </citation>
    <scope>VARIANT STHAG10 SER-626</scope>
    <scope>INVOLVEMENT IN STHAG10</scope>
</reference>
<reference key="7">
    <citation type="journal article" date="2020" name="Oral Dis.">
        <title>Novel TSPEAR mutations in non-syndromic oligodontia.</title>
        <authorList>
            <person name="Song J.S."/>
            <person name="Bae M."/>
            <person name="Kim J.W."/>
        </authorList>
    </citation>
    <scope>VARIANTS STHAG10 TRP-444 AND 510-ARG--ARG-669 DEL</scope>
</reference>
<reference key="8">
    <citation type="journal article" date="2021" name="Am. J. Med. Genet. A">
        <title>TSPEAR variants are primarily associated with ectodermal dysplasia and tooth agenesis but not hearing loss: A novel cohort study.</title>
        <authorList>
            <consortium name="Undiagnosed Diseases Network"/>
            <person name="Bowles B."/>
            <person name="Ferrer A."/>
            <person name="Nishimura C.J."/>
            <person name="Pinto Vairo F."/>
            <person name="Rey T."/>
            <person name="Leheup B."/>
            <person name="Sullivan J."/>
            <person name="Schoch K."/>
            <person name="Stong N."/>
            <person name="Agolini E."/>
            <person name="Cocciadiferro D."/>
            <person name="Williams A."/>
            <person name="Cummings A."/>
            <person name="Loddo S."/>
            <person name="Genovese S."/>
            <person name="Roadhouse C."/>
            <person name="McWalter K."/>
            <person name="Wentzensen I.M."/>
            <person name="Li C."/>
            <person name="Babovic-Vuksanovic D."/>
            <person name="Lanpher B.C."/>
            <person name="Dentici M.L."/>
            <person name="Ankala A."/>
            <person name="Hamm J.A."/>
            <person name="Dallapiccola B."/>
            <person name="Radio F.C."/>
            <person name="Shashi V."/>
            <person name="Gerard B."/>
            <person name="Bloch-Zupan A."/>
            <person name="Smith R.J."/>
            <person name="Klee E.W."/>
        </authorList>
    </citation>
    <scope>VARIANTS ECTD14 TRP-80; 197-ARG--ARG-669 DEL; 314-TYR--ARG-669 DEL; GLN-490; ASP-525 AND ILE-585</scope>
    <scope>VARIANTS DFNB98 LEU-178 AND ALA-388</scope>
    <scope>VARIANTS STHAG10 197-ARG--ARG-669 DEL; GLN-444; 555-GLN--ARG-669 DEL AND ASN-639</scope>
</reference>
<keyword id="KW-0025">Alternative splicing</keyword>
<keyword id="KW-0966">Cell projection</keyword>
<keyword id="KW-0209">Deafness</keyword>
<keyword id="KW-0225">Disease variant</keyword>
<keyword id="KW-0038">Ectodermal dysplasia</keyword>
<keyword id="KW-0325">Glycoprotein</keyword>
<keyword id="KW-1009">Hearing</keyword>
<keyword id="KW-1010">Non-syndromic deafness</keyword>
<keyword id="KW-1267">Proteomics identification</keyword>
<keyword id="KW-1185">Reference proteome</keyword>
<keyword id="KW-0677">Repeat</keyword>
<keyword id="KW-0964">Secreted</keyword>
<keyword id="KW-0732">Signal</keyword>
<sequence length="669" mass="74924">MSALLSLCFVLPLAAPGHGTQGWEPCTDLRPLDILAEVVPSDGATSGIRIVQVHGARGLQLSVAAPRTMSFPASRIFSQCDLFPEEFSIVVTLRVPNLPPKRNEYLLTVVAEESDLLLLGLRLSPAQLHFLFLREDTAGAWQTRVSFRSPALVDGRWHTLVLAVSAGVFSLTTDCGLPVDIMADVPFPATLSVKGARFFVGSRRRAKGLFMGLVRQLVLLPGSDATPRLCPSRNAPLAVLSIPRVLQALTGKPEDNEVLKYPYETNIRVTLGPQPPCTEVEDAQFWFDASRKGLYLCVGNEWVSVLAAKERLDYVEEHQNLSTNSETLGIEVFRIPQVGLFVATANRKATSAVYKWTEEKFVSYQNIPTHQAQAWRHFTIGKKIFLAVANFEPDEKGQEFSVIYKWSHRKLKFTPYQSIATHSARDWEAFEVDGEHFLAVANHREGDNHNIDSVIYKWNPATRLFEANQTIATSGAYDWEFFSVGPYSFLVVANTFNGTSTKVHSHLYIRLLGSFQLFQSFPTFGAADWEVFQIGERIFLAVANSHSYDVEMQVQNDSYVINSVIYELNVTAQAFVKFQDILTCSALDWEFFSVGEDYFLVVANSFDGRTFSVNSIIYRWQGYEGFVAVHSLPTVGCRDWEAFSTTAGAYLIYSSAKEPLSRVLRLRTR</sequence>
<protein>
    <recommendedName>
        <fullName>Thrombospondin-type laminin G domain and EAR repeat-containing protein</fullName>
        <shortName>TSP-EAR</shortName>
    </recommendedName>
</protein>
<name>TSEAR_HUMAN</name>
<comment type="function">
    <text evidence="5 6">Plays a critical role in tooth and hair follicle morphogenesis through regulation of the Notch signaling pathway (PubMed:27736875). May play a role in development or function of the auditory system (PubMed:22678063).</text>
</comment>
<comment type="subcellular location">
    <subcellularLocation>
        <location evidence="1">Secreted</location>
    </subcellularLocation>
    <subcellularLocation>
        <location evidence="1">Cell surface</location>
    </subcellularLocation>
    <subcellularLocation>
        <location evidence="1">Cell projection</location>
        <location evidence="1">Stereocilium</location>
    </subcellularLocation>
    <text evidence="1">Secreted protein which may bind to the cell surface via a membrane receptor.</text>
</comment>
<comment type="alternative products">
    <event type="alternative splicing"/>
    <isoform>
        <id>Q8WU66-1</id>
        <name>1</name>
        <sequence type="displayed"/>
    </isoform>
    <isoform>
        <id>Q8WU66-2</id>
        <name>2</name>
        <sequence type="described" ref="VSP_004006 VSP_004007"/>
    </isoform>
</comment>
<comment type="disease" evidence="5 9">
    <disease id="DI-03535">
        <name>Deafness, autosomal recessive, 98</name>
        <acronym>DFNB98</acronym>
        <description>A form of non-syndromic sensorineural hearing loss with prelingual onset. Sensorineural deafness results from damage to the neural receptors of the inner ear, the nerve pathways to the brain, or the area of the brain that receives sound information.</description>
        <dbReference type="MIM" id="614861"/>
    </disease>
    <text>The disease is caused by variants affecting the gene represented in this entry.</text>
</comment>
<comment type="disease" evidence="6 9">
    <disease id="DI-05382">
        <name>Ectodermal dysplasia 14, hair/tooth type with or without hypohidrosis</name>
        <acronym>ECTD14</acronym>
        <description>A form of ectodermal dysplasia, a disorder due to abnormal development of two or more ectodermal structures. ECTD14 is an autosomal recessive form characterized by scalp hypotrichosis, hypodontia, and mild facial dysmorphism. Some patients have decreased sweating.</description>
        <dbReference type="MIM" id="618180"/>
    </disease>
    <text>The disease is caused by variants affecting the gene represented in this entry.</text>
</comment>
<comment type="disease" evidence="7 8 9">
    <disease id="DI-06568">
        <name>Tooth agenesis, selective, 10</name>
        <acronym>STHAG10</acronym>
        <description>A form of selective tooth agenesis, a common anomaly characterized by the congenital absence of one or more teeth. Selective tooth agenesis without associated systemic disorders has sometimes been divided into 2 types: oligodontia, defined as agenesis of 6 or more permanent teeth, and hypodontia, defined as agenesis of less than 6 teeth. The number in both cases does not include absence of third molars (wisdom teeth). STHAG10 inheritance is autosomal recessive.</description>
        <dbReference type="MIM" id="620173"/>
    </disease>
    <text>The disease is caused by variants affecting the gene represented in this entry.</text>
</comment>
<comment type="sequence caution" evidence="11">
    <conflict type="miscellaneous discrepancy">
        <sequence resource="EMBL-CDS" id="AAH21197"/>
    </conflict>
    <text>Intron retention.</text>
</comment>
<organism>
    <name type="scientific">Homo sapiens</name>
    <name type="common">Human</name>
    <dbReference type="NCBI Taxonomy" id="9606"/>
    <lineage>
        <taxon>Eukaryota</taxon>
        <taxon>Metazoa</taxon>
        <taxon>Chordata</taxon>
        <taxon>Craniata</taxon>
        <taxon>Vertebrata</taxon>
        <taxon>Euteleostomi</taxon>
        <taxon>Mammalia</taxon>
        <taxon>Eutheria</taxon>
        <taxon>Euarchontoglires</taxon>
        <taxon>Primates</taxon>
        <taxon>Haplorrhini</taxon>
        <taxon>Catarrhini</taxon>
        <taxon>Hominidae</taxon>
        <taxon>Homo</taxon>
    </lineage>
</organism>
<gene>
    <name type="primary">TSPEAR</name>
    <name type="synonym">C21orf29</name>
</gene>